<dbReference type="EMBL" id="L12026">
    <property type="protein sequence ID" value="AAA02632.1"/>
    <property type="molecule type" value="Unassigned_DNA"/>
</dbReference>
<dbReference type="EMBL" id="U18778">
    <property type="protein sequence ID" value="AAB64555.1"/>
    <property type="molecule type" value="Genomic_DNA"/>
</dbReference>
<dbReference type="EMBL" id="AY693166">
    <property type="protein sequence ID" value="AAT93185.1"/>
    <property type="molecule type" value="Genomic_DNA"/>
</dbReference>
<dbReference type="EMBL" id="X57338">
    <property type="protein sequence ID" value="CAA40613.1"/>
    <property type="molecule type" value="Genomic_DNA"/>
</dbReference>
<dbReference type="EMBL" id="BK006939">
    <property type="protein sequence ID" value="DAA07675.1"/>
    <property type="molecule type" value="Genomic_DNA"/>
</dbReference>
<dbReference type="PIR" id="A40711">
    <property type="entry name" value="A40711"/>
</dbReference>
<dbReference type="RefSeq" id="NP_010939.1">
    <property type="nucleotide sequence ID" value="NM_001178913.1"/>
</dbReference>
<dbReference type="PDB" id="3J1O">
    <property type="method" value="EM"/>
    <property type="resolution" value="16.00 A"/>
    <property type="chains" value="I=197-616, I=669-687"/>
</dbReference>
<dbReference type="PDB" id="3RJ1">
    <property type="method" value="X-ray"/>
    <property type="resolution" value="4.30 A"/>
    <property type="chains" value="B/I/P=109-616, B/I/P=669-687"/>
</dbReference>
<dbReference type="PDB" id="4GWP">
    <property type="method" value="X-ray"/>
    <property type="resolution" value="4.20 A"/>
    <property type="chains" value="B=1-687"/>
</dbReference>
<dbReference type="PDB" id="4GWQ">
    <property type="method" value="X-ray"/>
    <property type="resolution" value="4.50 A"/>
    <property type="chains" value="B=1-687"/>
</dbReference>
<dbReference type="PDB" id="4H62">
    <property type="method" value="X-ray"/>
    <property type="resolution" value="3.00 A"/>
    <property type="chains" value="Q=377-687"/>
</dbReference>
<dbReference type="PDB" id="4V1O">
    <property type="method" value="EM"/>
    <property type="resolution" value="9.70 A"/>
    <property type="chains" value="W=2-687"/>
</dbReference>
<dbReference type="PDB" id="5OQM">
    <property type="method" value="EM"/>
    <property type="resolution" value="5.80 A"/>
    <property type="chains" value="d=1-687"/>
</dbReference>
<dbReference type="PDB" id="5SVA">
    <property type="method" value="EM"/>
    <property type="resolution" value="15.30 A"/>
    <property type="chains" value="P=1-687"/>
</dbReference>
<dbReference type="PDB" id="7UI9">
    <property type="method" value="EM"/>
    <property type="resolution" value="3.30 A"/>
    <property type="chains" value="q=1-687"/>
</dbReference>
<dbReference type="PDB" id="7UIF">
    <property type="method" value="EM"/>
    <property type="resolution" value="4.60 A"/>
    <property type="chains" value="q=1-687"/>
</dbReference>
<dbReference type="PDB" id="7UIG">
    <property type="method" value="EM"/>
    <property type="resolution" value="4.30 A"/>
    <property type="chains" value="q=1-687"/>
</dbReference>
<dbReference type="PDB" id="7UIO">
    <property type="method" value="EM"/>
    <property type="resolution" value="3.30 A"/>
    <property type="chains" value="Aq/Bq=1-687"/>
</dbReference>
<dbReference type="PDB" id="8CEN">
    <property type="method" value="EM"/>
    <property type="resolution" value="3.00 A"/>
    <property type="chains" value="d=1-687"/>
</dbReference>
<dbReference type="PDB" id="8CEO">
    <property type="method" value="EM"/>
    <property type="resolution" value="3.60 A"/>
    <property type="chains" value="d=1-687"/>
</dbReference>
<dbReference type="PDBsum" id="3J1O"/>
<dbReference type="PDBsum" id="3RJ1"/>
<dbReference type="PDBsum" id="4GWP"/>
<dbReference type="PDBsum" id="4GWQ"/>
<dbReference type="PDBsum" id="4H62"/>
<dbReference type="PDBsum" id="4V1O"/>
<dbReference type="PDBsum" id="5OQM"/>
<dbReference type="PDBsum" id="5SVA"/>
<dbReference type="PDBsum" id="7UI9"/>
<dbReference type="PDBsum" id="7UIF"/>
<dbReference type="PDBsum" id="7UIG"/>
<dbReference type="PDBsum" id="7UIO"/>
<dbReference type="PDBsum" id="8CEN"/>
<dbReference type="PDBsum" id="8CEO"/>
<dbReference type="EMDB" id="EMD-26542"/>
<dbReference type="EMDB" id="EMD-26544"/>
<dbReference type="EMDB" id="EMD-26545"/>
<dbReference type="EMDB" id="EMD-26551"/>
<dbReference type="EMDB" id="EMD-2786"/>
<dbReference type="EMDB" id="EMD-3850"/>
<dbReference type="EMDB" id="EMD-8305"/>
<dbReference type="SMR" id="P32569"/>
<dbReference type="BioGRID" id="36756">
    <property type="interactions" value="192"/>
</dbReference>
<dbReference type="ComplexPortal" id="CPX-3226">
    <property type="entry name" value="Core mediator complex"/>
</dbReference>
<dbReference type="DIP" id="DIP-152N"/>
<dbReference type="FunCoup" id="P32569">
    <property type="interactions" value="208"/>
</dbReference>
<dbReference type="IntAct" id="P32569">
    <property type="interactions" value="31"/>
</dbReference>
<dbReference type="MINT" id="P32569"/>
<dbReference type="STRING" id="4932.YER022W"/>
<dbReference type="iPTMnet" id="P32569"/>
<dbReference type="PaxDb" id="4932-YER022W"/>
<dbReference type="PeptideAtlas" id="P32569"/>
<dbReference type="EnsemblFungi" id="YER022W_mRNA">
    <property type="protein sequence ID" value="YER022W"/>
    <property type="gene ID" value="YER022W"/>
</dbReference>
<dbReference type="GeneID" id="856743"/>
<dbReference type="KEGG" id="sce:YER022W"/>
<dbReference type="AGR" id="SGD:S000000824"/>
<dbReference type="SGD" id="S000000824">
    <property type="gene designation" value="SRB4"/>
</dbReference>
<dbReference type="VEuPathDB" id="FungiDB:YER022W"/>
<dbReference type="eggNOG" id="ENOG502QS9H">
    <property type="taxonomic scope" value="Eukaryota"/>
</dbReference>
<dbReference type="HOGENOM" id="CLU_023188_0_0_1"/>
<dbReference type="InParanoid" id="P32569"/>
<dbReference type="OMA" id="PKINDKR"/>
<dbReference type="OrthoDB" id="5319830at2759"/>
<dbReference type="BioCyc" id="YEAST:G3O-30206-MONOMER"/>
<dbReference type="BioGRID-ORCS" id="856743">
    <property type="hits" value="3 hits in 10 CRISPR screens"/>
</dbReference>
<dbReference type="EvolutionaryTrace" id="P32569"/>
<dbReference type="PRO" id="PR:P32569"/>
<dbReference type="Proteomes" id="UP000002311">
    <property type="component" value="Chromosome V"/>
</dbReference>
<dbReference type="RNAct" id="P32569">
    <property type="molecule type" value="protein"/>
</dbReference>
<dbReference type="GO" id="GO:0070847">
    <property type="term" value="C:core mediator complex"/>
    <property type="evidence" value="ECO:0000314"/>
    <property type="project" value="SGD"/>
</dbReference>
<dbReference type="GO" id="GO:0016592">
    <property type="term" value="C:mediator complex"/>
    <property type="evidence" value="ECO:0000318"/>
    <property type="project" value="GO_Central"/>
</dbReference>
<dbReference type="GO" id="GO:0005634">
    <property type="term" value="C:nucleus"/>
    <property type="evidence" value="ECO:0000314"/>
    <property type="project" value="ComplexPortal"/>
</dbReference>
<dbReference type="GO" id="GO:0140297">
    <property type="term" value="F:DNA-binding transcription factor binding"/>
    <property type="evidence" value="ECO:0000314"/>
    <property type="project" value="SGD"/>
</dbReference>
<dbReference type="GO" id="GO:0001139">
    <property type="term" value="F:RNA polymerase II complex recruiting activity"/>
    <property type="evidence" value="ECO:0000315"/>
    <property type="project" value="SGD"/>
</dbReference>
<dbReference type="GO" id="GO:0000979">
    <property type="term" value="F:RNA polymerase II core promoter sequence-specific DNA binding"/>
    <property type="evidence" value="ECO:0000314"/>
    <property type="project" value="SGD"/>
</dbReference>
<dbReference type="GO" id="GO:0003712">
    <property type="term" value="F:transcription coregulator activity"/>
    <property type="evidence" value="ECO:0000318"/>
    <property type="project" value="GO_Central"/>
</dbReference>
<dbReference type="GO" id="GO:0034605">
    <property type="term" value="P:cellular response to heat"/>
    <property type="evidence" value="ECO:0000314"/>
    <property type="project" value="SGD"/>
</dbReference>
<dbReference type="GO" id="GO:0045944">
    <property type="term" value="P:positive regulation of transcription by RNA polymerase II"/>
    <property type="evidence" value="ECO:0000314"/>
    <property type="project" value="SGD"/>
</dbReference>
<dbReference type="GO" id="GO:0032968">
    <property type="term" value="P:positive regulation of transcription elongation by RNA polymerase II"/>
    <property type="evidence" value="ECO:0000314"/>
    <property type="project" value="ComplexPortal"/>
</dbReference>
<dbReference type="GO" id="GO:0060261">
    <property type="term" value="P:positive regulation of transcription initiation by RNA polymerase II"/>
    <property type="evidence" value="ECO:0000314"/>
    <property type="project" value="ComplexPortal"/>
</dbReference>
<dbReference type="GO" id="GO:0006357">
    <property type="term" value="P:regulation of transcription by RNA polymerase II"/>
    <property type="evidence" value="ECO:0000318"/>
    <property type="project" value="GO_Central"/>
</dbReference>
<dbReference type="GO" id="GO:0051123">
    <property type="term" value="P:RNA polymerase II preinitiation complex assembly"/>
    <property type="evidence" value="ECO:0000314"/>
    <property type="project" value="ComplexPortal"/>
</dbReference>
<dbReference type="GO" id="GO:0006367">
    <property type="term" value="P:transcription initiation at RNA polymerase II promoter"/>
    <property type="evidence" value="ECO:0000315"/>
    <property type="project" value="SGD"/>
</dbReference>
<dbReference type="Gene3D" id="6.10.250.2620">
    <property type="match status" value="1"/>
</dbReference>
<dbReference type="InterPro" id="IPR019313">
    <property type="entry name" value="Mediator_Med17"/>
</dbReference>
<dbReference type="PANTHER" id="PTHR13114">
    <property type="entry name" value="MEDIATOR OF RNA POLYMERASE II TRANSCRIPTION SUBUNIT 17"/>
    <property type="match status" value="1"/>
</dbReference>
<dbReference type="PANTHER" id="PTHR13114:SF7">
    <property type="entry name" value="MEDIATOR OF RNA POLYMERASE II TRANSCRIPTION SUBUNIT 17"/>
    <property type="match status" value="1"/>
</dbReference>
<dbReference type="Pfam" id="PF10156">
    <property type="entry name" value="Med17"/>
    <property type="match status" value="1"/>
</dbReference>
<gene>
    <name type="primary">SRB4</name>
    <name type="synonym">MED17</name>
    <name type="ordered locus">YER022W</name>
</gene>
<evidence type="ECO:0000256" key="1">
    <source>
        <dbReference type="SAM" id="MobiDB-lite"/>
    </source>
</evidence>
<evidence type="ECO:0000269" key="2">
    <source>
    </source>
</evidence>
<evidence type="ECO:0000269" key="3">
    <source>
    </source>
</evidence>
<evidence type="ECO:0000269" key="4">
    <source>
    </source>
</evidence>
<evidence type="ECO:0000269" key="5">
    <source>
    </source>
</evidence>
<evidence type="ECO:0000269" key="6">
    <source>
    </source>
</evidence>
<evidence type="ECO:0000269" key="7">
    <source>
    </source>
</evidence>
<evidence type="ECO:0000269" key="8">
    <source>
    </source>
</evidence>
<evidence type="ECO:0000269" key="9">
    <source>
    </source>
</evidence>
<evidence type="ECO:0000269" key="10">
    <source>
    </source>
</evidence>
<evidence type="ECO:0000269" key="11">
    <source>
    </source>
</evidence>
<evidence type="ECO:0000269" key="12">
    <source>
    </source>
</evidence>
<evidence type="ECO:0000269" key="13">
    <source>
    </source>
</evidence>
<evidence type="ECO:0000269" key="14">
    <source>
    </source>
</evidence>
<evidence type="ECO:0000305" key="15"/>
<evidence type="ECO:0007829" key="16">
    <source>
        <dbReference type="PDB" id="4H62"/>
    </source>
</evidence>
<keyword id="KW-0002">3D-structure</keyword>
<keyword id="KW-0010">Activator</keyword>
<keyword id="KW-0539">Nucleus</keyword>
<keyword id="KW-1185">Reference proteome</keyword>
<keyword id="KW-0804">Transcription</keyword>
<keyword id="KW-0805">Transcription regulation</keyword>
<proteinExistence type="evidence at protein level"/>
<name>MED17_YEAST</name>
<comment type="function">
    <text evidence="2 6 7 9 14">Component of the Mediator complex, a coactivator involved in the regulated transcription of nearly all RNA polymerase II-dependent genes. Mediator functions as a bridge to convey information from gene-specific regulatory proteins to the basal RNA polymerase II transcription machinery. The Mediator complex, having a compact conformation in its free form, is recruited to promoters by direct interactions with regulatory proteins and serves for the assembly of a functional preinitiation complex with RNA polymerase II and the general transcription factors. The Mediator complex unfolds to an extended conformation and partially surrounds RNA polymerase II, specifically interacting with the unphosphorylated form of the C-terminal domain (CTD) of RNA polymerase II. The Mediator complex dissociates from the RNA polymerase II holoenzyme and stays at the promoter when transcriptional elongation begins.</text>
</comment>
<comment type="subunit">
    <text evidence="2 5 9 10 12 13">Component of the Mediator complex, which is composed of at least 21 subunits that form three structurally distinct submodules. The Mediator head module contains MED6, MED8, MED11, SRB4/MED17, SRB5/MED18, ROX3/MED19, SRB2/MED20 and SRB6/MED22, the middle module contains MED1, MED4, NUT1/MED5, MED7, CSE2/MED9, NUT2/MED10, SRB7/MED21 and SOH1/MED31, and the tail module contains MED2, PGD1/MED3, RGR1/MED14, GAL11/MED15 and SIN4/MED16. The head and the middle modules interact directly with RNA polymerase II, whereas the elongated tail module interacts with gene-specific regulatory proteins. The head module may also interact with the TFIIF complex. SRB4/MED17 interacts directly with MED6, MED11, ROX3/MED19, SRB2/MED20 and SRB6/MED22. Interacts directly with the activator GAL4.</text>
</comment>
<comment type="interaction">
    <interactant intactId="EBI-18025">
        <id>P32569</id>
    </interactant>
    <interactant intactId="EBI-27213">
        <id>Q99278</id>
        <label>MED11</label>
    </interactant>
    <organismsDiffer>false</organismsDiffer>
    <experiments>22</experiments>
</comment>
<comment type="interaction">
    <interactant intactId="EBI-18025">
        <id>P32569</id>
    </interactant>
    <interactant intactId="EBI-10667">
        <id>P38782</id>
        <label>MED6</label>
    </interactant>
    <organismsDiffer>false</organismsDiffer>
    <experiments>8</experiments>
</comment>
<comment type="interaction">
    <interactant intactId="EBI-18025">
        <id>P32569</id>
    </interactant>
    <interactant intactId="EBI-20932">
        <id>P38304</id>
        <label>MED8</label>
    </interactant>
    <organismsDiffer>false</organismsDiffer>
    <experiments>10</experiments>
</comment>
<comment type="interaction">
    <interactant intactId="EBI-18025">
        <id>P32569</id>
    </interactant>
    <interactant intactId="EBI-17658">
        <id>P38633</id>
        <label>SOH1</label>
    </interactant>
    <organismsDiffer>false</organismsDiffer>
    <experiments>5</experiments>
</comment>
<comment type="interaction">
    <interactant intactId="EBI-18025">
        <id>P32569</id>
    </interactant>
    <interactant intactId="EBI-18039">
        <id>P32570</id>
        <label>SRB6</label>
    </interactant>
    <organismsDiffer>false</organismsDiffer>
    <experiments>12</experiments>
</comment>
<comment type="interaction">
    <interactant intactId="EBI-18025">
        <id>P32569</id>
    </interactant>
    <interactant intactId="EBI-18046">
        <id>P47822</id>
        <label>SRB7</label>
    </interactant>
    <organismsDiffer>false</organismsDiffer>
    <experiments>3</experiments>
</comment>
<comment type="interaction">
    <interactant intactId="EBI-18025">
        <id>P32569</id>
    </interactant>
    <interactant intactId="EBI-18059">
        <id>P38931</id>
        <label>SSN2</label>
    </interactant>
    <organismsDiffer>false</organismsDiffer>
    <experiments>3</experiments>
</comment>
<comment type="subcellular location">
    <subcellularLocation>
        <location evidence="3 8">Nucleus</location>
    </subcellularLocation>
</comment>
<comment type="miscellaneous">
    <text evidence="4">Present with 1720 molecules/cell in log phase SD medium.</text>
</comment>
<comment type="similarity">
    <text evidence="15">Belongs to the Mediator complex subunit 17 family.</text>
</comment>
<organism>
    <name type="scientific">Saccharomyces cerevisiae (strain ATCC 204508 / S288c)</name>
    <name type="common">Baker's yeast</name>
    <dbReference type="NCBI Taxonomy" id="559292"/>
    <lineage>
        <taxon>Eukaryota</taxon>
        <taxon>Fungi</taxon>
        <taxon>Dikarya</taxon>
        <taxon>Ascomycota</taxon>
        <taxon>Saccharomycotina</taxon>
        <taxon>Saccharomycetes</taxon>
        <taxon>Saccharomycetales</taxon>
        <taxon>Saccharomycetaceae</taxon>
        <taxon>Saccharomyces</taxon>
    </lineage>
</organism>
<protein>
    <recommendedName>
        <fullName>Mediator of RNA polymerase II transcription subunit 17</fullName>
    </recommendedName>
    <alternativeName>
        <fullName>Mediator complex subunit 17</fullName>
    </alternativeName>
    <alternativeName>
        <fullName>Suppressor of RNA polymerase B 4</fullName>
    </alternativeName>
</protein>
<sequence>MTTEDPDSNHLSSETGIKLALDPNLITLALSSNPNSSLHSPTSDEPVPESAGKADTSIRLEGDELENKTKKDNDKNLKFLKNKDSLVSNPHEIYGSMPLEQLIPIILRQRGPGFKFVDLNEKELQNEIKQLGSDSSDGHNSEKKDTDGADENVQIGEDFMEVDYEDKDNPVDSRNETDHKTNENGETDDNIETVMTQEQFVKRRRDMLEHINLAMNESSLALEFVSLLLSSVKESTGMSSMSPFLRKVVKPSSLNSDKIPYVAPTKKEYIELDILNKGWKLQSLNESKDLLRASFNKLSSILQNEHDYWNKIMQSISNKDVIFKIRDRTSGQKLLAIKYGYEDSGSTYKHDRGIANIRNNIESQNLDLIPHSSSVFKGTDFVHSVKKFLRVRIFTKIESEDDYILSGESVMDRDSESEEAETKDIRKQIQLLKKIIFEKELMYQIKKECALLISYGVSIENENKVIIELPNEKFEIELLSLDDDSIVNHEQDLPKINDKRANLMLVMLRLLLVVIFKKTLRSRISSPHGLINLNVDDDILIIRPILGKVRFANYKLLLKKIIKDYVLDIVPGSSITETEVEREQPQENKNIDDENITKLNKEIRAFDKLLNIPRRELKINLPLTEHKSPNLSLMLESPNYCNALIHIKFSAGTEANAVSFDTTFSDFKEVEDFLHFIVAEYIQQKKV</sequence>
<reference key="1">
    <citation type="journal article" date="1993" name="Cell">
        <title>A multisubunit complex associated with the RNA polymerase II CTD and TATA-binding protein in yeast.</title>
        <authorList>
            <person name="Thompson C.M."/>
            <person name="Koleske A.J."/>
            <person name="Chao D.M."/>
            <person name="Young R.A."/>
        </authorList>
    </citation>
    <scope>NUCLEOTIDE SEQUENCE [GENOMIC DNA]</scope>
    <scope>MUTAGENESIS OF GLY-353</scope>
    <source>
        <strain>Z28</strain>
    </source>
</reference>
<reference key="2">
    <citation type="journal article" date="1997" name="Nature">
        <title>The nucleotide sequence of Saccharomyces cerevisiae chromosome V.</title>
        <authorList>
            <person name="Dietrich F.S."/>
            <person name="Mulligan J.T."/>
            <person name="Hennessy K.M."/>
            <person name="Yelton M.A."/>
            <person name="Allen E."/>
            <person name="Araujo R."/>
            <person name="Aviles E."/>
            <person name="Berno A."/>
            <person name="Brennan T."/>
            <person name="Carpenter J."/>
            <person name="Chen E."/>
            <person name="Cherry J.M."/>
            <person name="Chung E."/>
            <person name="Duncan M."/>
            <person name="Guzman E."/>
            <person name="Hartzell G."/>
            <person name="Hunicke-Smith S."/>
            <person name="Hyman R.W."/>
            <person name="Kayser A."/>
            <person name="Komp C."/>
            <person name="Lashkari D."/>
            <person name="Lew H."/>
            <person name="Lin D."/>
            <person name="Mosedale D."/>
            <person name="Nakahara K."/>
            <person name="Namath A."/>
            <person name="Norgren R."/>
            <person name="Oefner P."/>
            <person name="Oh C."/>
            <person name="Petel F.X."/>
            <person name="Roberts D."/>
            <person name="Sehl P."/>
            <person name="Schramm S."/>
            <person name="Shogren T."/>
            <person name="Smith V."/>
            <person name="Taylor P."/>
            <person name="Wei Y."/>
            <person name="Botstein D."/>
            <person name="Davis R.W."/>
        </authorList>
    </citation>
    <scope>NUCLEOTIDE SEQUENCE [LARGE SCALE GENOMIC DNA]</scope>
    <source>
        <strain>ATCC 204508 / S288c</strain>
    </source>
</reference>
<reference key="3">
    <citation type="journal article" date="2014" name="G3 (Bethesda)">
        <title>The reference genome sequence of Saccharomyces cerevisiae: Then and now.</title>
        <authorList>
            <person name="Engel S.R."/>
            <person name="Dietrich F.S."/>
            <person name="Fisk D.G."/>
            <person name="Binkley G."/>
            <person name="Balakrishnan R."/>
            <person name="Costanzo M.C."/>
            <person name="Dwight S.S."/>
            <person name="Hitz B.C."/>
            <person name="Karra K."/>
            <person name="Nash R.S."/>
            <person name="Weng S."/>
            <person name="Wong E.D."/>
            <person name="Lloyd P."/>
            <person name="Skrzypek M.S."/>
            <person name="Miyasato S.R."/>
            <person name="Simison M."/>
            <person name="Cherry J.M."/>
        </authorList>
    </citation>
    <scope>GENOME REANNOTATION</scope>
    <source>
        <strain>ATCC 204508 / S288c</strain>
    </source>
</reference>
<reference key="4">
    <citation type="journal article" date="2007" name="Genome Res.">
        <title>Approaching a complete repository of sequence-verified protein-encoding clones for Saccharomyces cerevisiae.</title>
        <authorList>
            <person name="Hu Y."/>
            <person name="Rolfs A."/>
            <person name="Bhullar B."/>
            <person name="Murthy T.V.S."/>
            <person name="Zhu C."/>
            <person name="Berger M.F."/>
            <person name="Camargo A.A."/>
            <person name="Kelley F."/>
            <person name="McCarron S."/>
            <person name="Jepson D."/>
            <person name="Richardson A."/>
            <person name="Raphael J."/>
            <person name="Moreira D."/>
            <person name="Taycher E."/>
            <person name="Zuo D."/>
            <person name="Mohr S."/>
            <person name="Kane M.F."/>
            <person name="Williamson J."/>
            <person name="Simpson A.J.G."/>
            <person name="Bulyk M.L."/>
            <person name="Harlow E."/>
            <person name="Marsischky G."/>
            <person name="Kolodner R.D."/>
            <person name="LaBaer J."/>
        </authorList>
    </citation>
    <scope>NUCLEOTIDE SEQUENCE [GENOMIC DNA]</scope>
    <source>
        <strain>ATCC 204508 / S288c</strain>
    </source>
</reference>
<reference key="5">
    <citation type="journal article" date="1992" name="Mol. Gen. Genet.">
        <title>ore2, a mutation affecting proline biosynthesis in the yeast Saccharomyces cerevisiae, leads to a cdc phenotype.</title>
        <authorList>
            <person name="Neuville P."/>
            <person name="Aigle M."/>
        </authorList>
    </citation>
    <scope>NUCLEOTIDE SEQUENCE [GENOMIC DNA] OF 430-687</scope>
    <source>
        <strain>ATCC 44827 / SKQ2N</strain>
    </source>
</reference>
<reference key="6">
    <citation type="journal article" date="1994" name="Cell">
        <title>A multiprotein mediator of transcriptional activation and its interaction with the C-terminal repeat domain of RNA polymerase II.</title>
        <authorList>
            <person name="Kim Y.-J."/>
            <person name="Bjoerklund S."/>
            <person name="Li Y."/>
            <person name="Sayre M.H."/>
            <person name="Kornberg R.D."/>
        </authorList>
    </citation>
    <scope>COMPONENT OF MEDIATOR COMPLEX</scope>
</reference>
<reference key="7">
    <citation type="journal article" date="1998" name="Cell">
        <title>Dissecting the regulatory circuitry of a eukaryotic genome.</title>
        <authorList>
            <person name="Holstege F.C.P."/>
            <person name="Jennings E.G."/>
            <person name="Wyrick J.J."/>
            <person name="Lee T.I."/>
            <person name="Hengartner C.J."/>
            <person name="Green M.R."/>
            <person name="Golub T.R."/>
            <person name="Lander E.S."/>
            <person name="Young R.A."/>
        </authorList>
    </citation>
    <scope>FUNCTION</scope>
</reference>
<reference key="8">
    <citation type="journal article" date="1998" name="Mol. Cell">
        <title>An activator target in the RNA polymerase II holoenzyme.</title>
        <authorList>
            <person name="Koh S.S."/>
            <person name="Ansari A.Z."/>
            <person name="Ptashne M."/>
            <person name="Young R.A."/>
        </authorList>
    </citation>
    <scope>INTERACTION WITH GAL4; SRB2 AND SRB6</scope>
</reference>
<reference key="9">
    <citation type="journal article" date="1998" name="Mol. Cell. Biol.">
        <title>Interplay of positive and negative regulators in transcription initiation by RNA polymerase II holoenzyme.</title>
        <authorList>
            <person name="Lee T.I."/>
            <person name="Wyrick J.J."/>
            <person name="Koh S.S."/>
            <person name="Jennings E.G."/>
            <person name="Gadbois E.L."/>
            <person name="Young R.A."/>
        </authorList>
    </citation>
    <scope>INTERACTION WITH MED6 AND SRB6</scope>
</reference>
<reference key="10">
    <citation type="journal article" date="2001" name="J. Biol. Chem.">
        <title>The structural and functional organization of the yeast mediator complex.</title>
        <authorList>
            <person name="Kang J.S."/>
            <person name="Kim S.H."/>
            <person name="Hwang M.S."/>
            <person name="Han S.J."/>
            <person name="Lee Y.C."/>
            <person name="Kim Y.-J."/>
        </authorList>
    </citation>
    <scope>INTERACTION WITH MED11 AND ROX3</scope>
    <scope>FUNCTION OF THE MEDIATOR COMPLEX</scope>
    <scope>INTERACTION OF THE MEDIATOR COMPLEX WITH RNA POLYMERASE II</scope>
</reference>
<reference key="11">
    <citation type="journal article" date="2003" name="Nature">
        <title>Global analysis of protein localization in budding yeast.</title>
        <authorList>
            <person name="Huh W.-K."/>
            <person name="Falvo J.V."/>
            <person name="Gerke L.C."/>
            <person name="Carroll A.S."/>
            <person name="Howson R.W."/>
            <person name="Weissman J.S."/>
            <person name="O'Shea E.K."/>
        </authorList>
    </citation>
    <scope>SUBCELLULAR LOCATION [LARGE SCALE ANALYSIS]</scope>
</reference>
<reference key="12">
    <citation type="journal article" date="2003" name="Nature">
        <title>Global analysis of protein expression in yeast.</title>
        <authorList>
            <person name="Ghaemmaghami S."/>
            <person name="Huh W.-K."/>
            <person name="Bower K."/>
            <person name="Howson R.W."/>
            <person name="Belle A."/>
            <person name="Dephoure N."/>
            <person name="O'Shea E.K."/>
            <person name="Weissman J.S."/>
        </authorList>
    </citation>
    <scope>LEVEL OF PROTEIN EXPRESSION [LARGE SCALE ANALYSIS]</scope>
</reference>
<reference key="13">
    <citation type="journal article" date="2004" name="Mol. Cell">
        <title>A unified nomenclature for protein subunits of mediator complexes linking transcriptional regulators to RNA polymerase II.</title>
        <authorList>
            <person name="Bourbon H.-M."/>
            <person name="Aguilera A."/>
            <person name="Ansari A.Z."/>
            <person name="Asturias F.J."/>
            <person name="Berk A.J."/>
            <person name="Bjoerklund S."/>
            <person name="Blackwell T.K."/>
            <person name="Borggrefe T."/>
            <person name="Carey M."/>
            <person name="Carlson M."/>
            <person name="Conaway J.W."/>
            <person name="Conaway R.C."/>
            <person name="Emmons S.W."/>
            <person name="Fondell J.D."/>
            <person name="Freedman L.P."/>
            <person name="Fukasawa T."/>
            <person name="Gustafsson C.M."/>
            <person name="Han M."/>
            <person name="He X."/>
            <person name="Herman P.K."/>
            <person name="Hinnebusch A.G."/>
            <person name="Holmberg S."/>
            <person name="Holstege F.C.P."/>
            <person name="Jaehning J.A."/>
            <person name="Kim Y.-J."/>
            <person name="Kuras L."/>
            <person name="Leutz A."/>
            <person name="Lis J.T."/>
            <person name="Meisterernest M."/>
            <person name="Naeaer A.M."/>
            <person name="Nasmyth K."/>
            <person name="Parvin J.D."/>
            <person name="Ptashne M."/>
            <person name="Reinberg D."/>
            <person name="Ronne H."/>
            <person name="Sadowski I."/>
            <person name="Sakurai H."/>
            <person name="Sipiczki M."/>
            <person name="Sternberg P.W."/>
            <person name="Stillman D.J."/>
            <person name="Strich R."/>
            <person name="Struhl K."/>
            <person name="Svejstrup J.Q."/>
            <person name="Tuck S."/>
            <person name="Winston F."/>
            <person name="Roeder R.G."/>
            <person name="Kornberg R.D."/>
        </authorList>
    </citation>
    <scope>NOMENCLATURE</scope>
</reference>
<reference key="14">
    <citation type="journal article" date="2004" name="Nucleic Acids Res.">
        <title>A high resolution protein interaction map of the yeast Mediator complex.</title>
        <authorList>
            <person name="Guglielmi B."/>
            <person name="van Berkum N.L."/>
            <person name="Klapholz B."/>
            <person name="Bijma T."/>
            <person name="Boube M."/>
            <person name="Boschiero C."/>
            <person name="Bourbon H.-M."/>
            <person name="Holstege F.C.P."/>
            <person name="Werner M."/>
        </authorList>
    </citation>
    <scope>TOPOLOGY OF THE MEDIATOR COMPLEX</scope>
</reference>
<reference key="15">
    <citation type="journal article" date="2005" name="J. Biol. Chem.">
        <title>A conserved mediator hinge revealed in the structure of the MED7-MED21 (Med7-Srb7) heterodimer.</title>
        <authorList>
            <person name="Baumli S."/>
            <person name="Hoeppner S."/>
            <person name="Cramer P."/>
        </authorList>
    </citation>
    <scope>INTERACTION WITH MED6</scope>
</reference>
<reference key="16">
    <citation type="journal article" date="2005" name="J. Biol. Chem.">
        <title>Preponderance of free mediator in the yeast Saccharomyces cerevisiae.</title>
        <authorList>
            <person name="Takagi Y."/>
            <person name="Chadick J.Z."/>
            <person name="Davis J.A."/>
            <person name="Asturias F.J."/>
        </authorList>
    </citation>
    <scope>CHARACTERIZATION OF THE MEDIATOR COMPLEX</scope>
</reference>
<reference key="17">
    <citation type="journal article" date="2005" name="J. Biol. Chem.">
        <title>Mediator and TFIIH govern carboxyl-terminal domain-dependent transcription in yeast extracts.</title>
        <authorList>
            <person name="Nair D."/>
            <person name="Kim Y."/>
            <person name="Myers L.C."/>
        </authorList>
    </citation>
    <scope>FUNCTION OF THE MEDIATOR COMPLEX</scope>
</reference>
<reference key="18">
    <citation type="journal article" date="2006" name="J. Biol. Chem.">
        <title>Mediator as a general transcription factor.</title>
        <authorList>
            <person name="Takagi Y."/>
            <person name="Kornberg R.D."/>
        </authorList>
    </citation>
    <scope>FUNCTION OF THE MEDIATOR COMPLEX</scope>
</reference>
<reference key="19">
    <citation type="journal article" date="2006" name="Mol. Cell">
        <title>Genome-wide location of the coactivator mediator: binding without activation and transient Cdk8 interaction on DNA.</title>
        <authorList>
            <person name="Andrau J.-C."/>
            <person name="van de Pasch L."/>
            <person name="Lijnzaad P."/>
            <person name="Bijma T."/>
            <person name="Koerkamp M.G."/>
            <person name="van de Peppel J."/>
            <person name="Werner M."/>
            <person name="Holstege F.C.P."/>
        </authorList>
    </citation>
    <scope>SUBCELLULAR LOCATION</scope>
</reference>
<reference key="20">
    <citation type="journal article" date="2006" name="Nat. Struct. Mol. Biol.">
        <title>Activator-specific recruitment of Mediator in vivo.</title>
        <authorList>
            <person name="Fan X."/>
            <person name="Chou D.M."/>
            <person name="Struhl K."/>
        </authorList>
    </citation>
    <scope>ASSOCIATION WITH PROMOTER REGIONS</scope>
</reference>
<reference key="21">
    <citation type="journal article" date="2007" name="J. Biol. Chem.">
        <title>Med19(Rox3) regulates intermodule interactions in the Saccharomyces cerevisiae mediator complex.</title>
        <authorList>
            <person name="Baidoobonso S.M."/>
            <person name="Guidi B.W."/>
            <person name="Myers L.C."/>
        </authorList>
    </citation>
    <scope>CHARACTERIZATION OF THE MEDIATOR COMPLEX</scope>
    <scope>INTERACTION OF THE MEDIATOR COMPLEX WITH RNA POLYMERASE II</scope>
</reference>
<reference key="22">
    <citation type="journal article" date="2008" name="Mol. Cell. Proteomics">
        <title>A multidimensional chromatography technology for in-depth phosphoproteome analysis.</title>
        <authorList>
            <person name="Albuquerque C.P."/>
            <person name="Smolka M.B."/>
            <person name="Payne S.H."/>
            <person name="Bafna V."/>
            <person name="Eng J."/>
            <person name="Zhou H."/>
        </authorList>
    </citation>
    <scope>IDENTIFICATION BY MASS SPECTROMETRY [LARGE SCALE ANALYSIS]</scope>
</reference>
<reference key="23">
    <citation type="journal article" date="2009" name="Science">
        <title>Global analysis of Cdk1 substrate phosphorylation sites provides insights into evolution.</title>
        <authorList>
            <person name="Holt L.J."/>
            <person name="Tuch B.B."/>
            <person name="Villen J."/>
            <person name="Johnson A.D."/>
            <person name="Gygi S.P."/>
            <person name="Morgan D.O."/>
        </authorList>
    </citation>
    <scope>IDENTIFICATION BY MASS SPECTROMETRY [LARGE SCALE ANALYSIS]</scope>
</reference>
<reference key="24">
    <citation type="journal article" date="2002" name="Mol. Cell">
        <title>Structure of the yeast RNA polymerase II holoenzyme: mediator conformation and polymerase interaction.</title>
        <authorList>
            <person name="Davis J.A."/>
            <person name="Takagi Y."/>
            <person name="Kornberg R.D."/>
            <person name="Asturias F.J."/>
        </authorList>
    </citation>
    <scope>ELECTRON MICROSCOPY OF MEDIATOR COMPLEX IN COMPLEX WITH RNA POLYMERASE II</scope>
</reference>
<reference key="25">
    <citation type="journal article" date="2006" name="Mol. Cell">
        <title>Head module control of mediator interactions.</title>
        <authorList>
            <person name="Takagi Y."/>
            <person name="Calero G."/>
            <person name="Komori H."/>
            <person name="Brown J.A."/>
            <person name="Ehrensberger A.H."/>
            <person name="Hudmon A."/>
            <person name="Asturias F.J."/>
            <person name="Kornberg R.D."/>
        </authorList>
    </citation>
    <scope>ELECTRON MICROSCOPY OF THE MEDIATOR COMPLEX HEAD MODULE</scope>
    <scope>FUNCTION OF THE MEDIATOR COMPLEX HEAD MODULE</scope>
    <scope>INTERACTION OF THE MEDIATOR COMPLEX HEAD MODULE WITH RNA POLYMERASE II AND TFIIF</scope>
    <scope>INTERACTION WITH MED6; MED8; MED11; SRB2; SRB5 AND SRB6</scope>
</reference>
<accession>P32569</accession>
<accession>D3DLS1</accession>
<accession>Q06790</accession>
<accession>Q6B1B4</accession>
<feature type="chain" id="PRO_0000096366" description="Mediator of RNA polymerase II transcription subunit 17">
    <location>
        <begin position="1"/>
        <end position="687"/>
    </location>
</feature>
<feature type="region of interest" description="Disordered" evidence="1">
    <location>
        <begin position="30"/>
        <end position="70"/>
    </location>
</feature>
<feature type="region of interest" description="Disordered" evidence="1">
    <location>
        <begin position="130"/>
        <end position="189"/>
    </location>
</feature>
<feature type="compositionally biased region" description="Low complexity" evidence="1">
    <location>
        <begin position="30"/>
        <end position="43"/>
    </location>
</feature>
<feature type="compositionally biased region" description="Basic and acidic residues" evidence="1">
    <location>
        <begin position="56"/>
        <end position="70"/>
    </location>
</feature>
<feature type="compositionally biased region" description="Basic and acidic residues" evidence="1">
    <location>
        <begin position="136"/>
        <end position="147"/>
    </location>
</feature>
<feature type="compositionally biased region" description="Basic and acidic residues" evidence="1">
    <location>
        <begin position="167"/>
        <end position="183"/>
    </location>
</feature>
<feature type="mutagenesis site" description="In SRB4-1; suppresses the phenotypic defects of an RNA polymerase II CTD truncation." evidence="11">
    <original>G</original>
    <variation>C</variation>
    <location>
        <position position="353"/>
    </location>
</feature>
<feature type="sequence conflict" description="In Ref. 5; CAA40613." evidence="15" ref="5">
    <original>QL</original>
    <variation>PI</variation>
    <location>
        <begin position="430"/>
        <end position="431"/>
    </location>
</feature>
<feature type="sequence conflict" description="In Ref. 4; AAT93185." evidence="15" ref="4">
    <original>I</original>
    <variation>T</variation>
    <location>
        <position position="647"/>
    </location>
</feature>
<feature type="strand" evidence="16">
    <location>
        <begin position="388"/>
        <end position="396"/>
    </location>
</feature>
<feature type="strand" evidence="16">
    <location>
        <begin position="403"/>
        <end position="408"/>
    </location>
</feature>
<feature type="helix" evidence="16">
    <location>
        <begin position="425"/>
        <end position="449"/>
    </location>
</feature>
<feature type="helix" evidence="16">
    <location>
        <begin position="450"/>
        <end position="455"/>
    </location>
</feature>
<feature type="strand" evidence="16">
    <location>
        <begin position="457"/>
        <end position="461"/>
    </location>
</feature>
<feature type="strand" evidence="16">
    <location>
        <begin position="464"/>
        <end position="468"/>
    </location>
</feature>
<feature type="strand" evidence="16">
    <location>
        <begin position="470"/>
        <end position="479"/>
    </location>
</feature>
<feature type="helix" evidence="16">
    <location>
        <begin position="498"/>
        <end position="524"/>
    </location>
</feature>
<feature type="turn" evidence="16">
    <location>
        <begin position="525"/>
        <end position="527"/>
    </location>
</feature>
<feature type="helix" evidence="16">
    <location>
        <begin position="535"/>
        <end position="538"/>
    </location>
</feature>
<feature type="helix" evidence="16">
    <location>
        <begin position="542"/>
        <end position="565"/>
    </location>
</feature>
<feature type="turn" evidence="16">
    <location>
        <begin position="566"/>
        <end position="569"/>
    </location>
</feature>
<feature type="strand" evidence="16">
    <location>
        <begin position="574"/>
        <end position="579"/>
    </location>
</feature>
<feature type="helix" evidence="16">
    <location>
        <begin position="597"/>
        <end position="604"/>
    </location>
</feature>
<feature type="helix" evidence="16">
    <location>
        <begin position="607"/>
        <end position="610"/>
    </location>
</feature>
<feature type="strand" evidence="16">
    <location>
        <begin position="614"/>
        <end position="620"/>
    </location>
</feature>
<feature type="strand" evidence="16">
    <location>
        <begin position="630"/>
        <end position="636"/>
    </location>
</feature>
<feature type="strand" evidence="16">
    <location>
        <begin position="640"/>
        <end position="642"/>
    </location>
</feature>
<feature type="strand" evidence="16">
    <location>
        <begin position="644"/>
        <end position="650"/>
    </location>
</feature>
<feature type="turn" evidence="16">
    <location>
        <begin position="654"/>
        <end position="656"/>
    </location>
</feature>
<feature type="strand" evidence="16">
    <location>
        <begin position="660"/>
        <end position="665"/>
    </location>
</feature>
<feature type="helix" evidence="16">
    <location>
        <begin position="667"/>
        <end position="680"/>
    </location>
</feature>